<sequence>MASSSPCQIFLVFVMVTLVTSLIPSNALLTPHFYDNVCPQALPTIKSVVLHAILREKRIGASLLRLHFHDCFVNGCDGSVLLDDTPNFTGEKTALPNINSIRGFSVVDEIKAAVDKVCKGPVVSCADILATAARDSVAILGGPQFFYNVLLGRRDARTASKAAANANLPSPTFNFSQLISNFKSQGLNVKDLVALSGGHTIGFARCTTFRNRIYNETNIDPIFAASLRKTCPRNGGDNNLTPLDFTPTRVENTYYRDLLYKRGVLHSDQQLFKGQGSESDKLVQLYSKNTFAFASDFKTSLIKMGNIKPLTGRQGEIRLNCRRVR</sequence>
<feature type="signal peptide" evidence="3">
    <location>
        <begin position="1"/>
        <end position="21"/>
    </location>
</feature>
<feature type="chain" id="PRO_5014486682" description="Peroxidase RIP1">
    <location>
        <begin position="22"/>
        <end position="325"/>
    </location>
</feature>
<feature type="active site" description="Proton acceptor" evidence="4">
    <location>
        <position position="69"/>
    </location>
</feature>
<feature type="binding site" evidence="4">
    <location>
        <position position="70"/>
    </location>
    <ligand>
        <name>Ca(2+)</name>
        <dbReference type="ChEBI" id="CHEBI:29108"/>
        <label>1</label>
    </ligand>
</feature>
<feature type="binding site" evidence="4">
    <location>
        <position position="73"/>
    </location>
    <ligand>
        <name>Ca(2+)</name>
        <dbReference type="ChEBI" id="CHEBI:29108"/>
        <label>1</label>
    </ligand>
</feature>
<feature type="binding site" evidence="4">
    <location>
        <position position="75"/>
    </location>
    <ligand>
        <name>Ca(2+)</name>
        <dbReference type="ChEBI" id="CHEBI:29108"/>
        <label>1</label>
    </ligand>
</feature>
<feature type="binding site" evidence="4">
    <location>
        <position position="77"/>
    </location>
    <ligand>
        <name>Ca(2+)</name>
        <dbReference type="ChEBI" id="CHEBI:29108"/>
        <label>1</label>
    </ligand>
</feature>
<feature type="binding site" evidence="4">
    <location>
        <position position="79"/>
    </location>
    <ligand>
        <name>Ca(2+)</name>
        <dbReference type="ChEBI" id="CHEBI:29108"/>
        <label>1</label>
    </ligand>
</feature>
<feature type="binding site" evidence="4">
    <location>
        <position position="169"/>
    </location>
    <ligand>
        <name>substrate</name>
    </ligand>
</feature>
<feature type="binding site" description="axial binding residue" evidence="4">
    <location>
        <position position="199"/>
    </location>
    <ligand>
        <name>heme b</name>
        <dbReference type="ChEBI" id="CHEBI:60344"/>
    </ligand>
    <ligandPart>
        <name>Fe</name>
        <dbReference type="ChEBI" id="CHEBI:18248"/>
    </ligandPart>
</feature>
<feature type="binding site" evidence="4">
    <location>
        <position position="200"/>
    </location>
    <ligand>
        <name>Ca(2+)</name>
        <dbReference type="ChEBI" id="CHEBI:29108"/>
        <label>2</label>
    </ligand>
</feature>
<feature type="binding site" evidence="4">
    <location>
        <position position="244"/>
    </location>
    <ligand>
        <name>Ca(2+)</name>
        <dbReference type="ChEBI" id="CHEBI:29108"/>
        <label>2</label>
    </ligand>
</feature>
<feature type="binding site" evidence="4">
    <location>
        <position position="246"/>
    </location>
    <ligand>
        <name>Ca(2+)</name>
        <dbReference type="ChEBI" id="CHEBI:29108"/>
        <label>2</label>
    </ligand>
</feature>
<feature type="binding site" evidence="4">
    <location>
        <position position="251"/>
    </location>
    <ligand>
        <name>Ca(2+)</name>
        <dbReference type="ChEBI" id="CHEBI:29108"/>
        <label>2</label>
    </ligand>
</feature>
<feature type="site" description="Transition state stabilizer" evidence="4">
    <location>
        <position position="65"/>
    </location>
</feature>
<feature type="glycosylation site" description="N-linked (GlcNAc...) asparagine" evidence="5">
    <location>
        <position position="87"/>
    </location>
</feature>
<feature type="glycosylation site" description="N-linked (GlcNAc...) asparagine" evidence="5">
    <location>
        <position position="174"/>
    </location>
</feature>
<feature type="glycosylation site" description="N-linked (GlcNAc...) asparagine" evidence="5">
    <location>
        <position position="215"/>
    </location>
</feature>
<feature type="disulfide bond" evidence="1">
    <location>
        <begin position="38"/>
        <end position="118"/>
    </location>
</feature>
<feature type="disulfide bond" evidence="4">
    <location>
        <begin position="71"/>
        <end position="76"/>
    </location>
</feature>
<feature type="disulfide bond" evidence="4">
    <location>
        <begin position="125"/>
        <end position="321"/>
    </location>
</feature>
<feature type="disulfide bond" evidence="4">
    <location>
        <begin position="206"/>
        <end position="231"/>
    </location>
</feature>
<dbReference type="EC" id="1.11.1.7" evidence="2"/>
<dbReference type="EMBL" id="U16727">
    <property type="protein sequence ID" value="AAB48986.1"/>
    <property type="molecule type" value="Genomic_DNA"/>
</dbReference>
<dbReference type="EMBL" id="CM001221">
    <property type="protein sequence ID" value="AES98948.1"/>
    <property type="molecule type" value="Genomic_DNA"/>
</dbReference>
<dbReference type="EMBL" id="CM001221">
    <property type="protein sequence ID" value="AES98949.1"/>
    <property type="status" value="ALT_SEQ"/>
    <property type="molecule type" value="Genomic_DNA"/>
</dbReference>
<dbReference type="EMBL" id="PSQE01000005">
    <property type="protein sequence ID" value="RHN56715.1"/>
    <property type="status" value="ALT_SEQ"/>
    <property type="molecule type" value="Genomic_DNA"/>
</dbReference>
<dbReference type="RefSeq" id="XP_003615990.1">
    <property type="nucleotide sequence ID" value="XM_003615942.2"/>
</dbReference>
<dbReference type="RefSeq" id="XP_003615991.1">
    <property type="nucleotide sequence ID" value="XM_003615943.2"/>
</dbReference>
<dbReference type="SMR" id="Q40372"/>
<dbReference type="STRING" id="3880.Q40372"/>
<dbReference type="PeroxiBase" id="59">
    <property type="entry name" value="MtPrx01"/>
</dbReference>
<dbReference type="PaxDb" id="3880-AES98948"/>
<dbReference type="GeneID" id="11426647"/>
<dbReference type="KEGG" id="mtr:11426647"/>
<dbReference type="eggNOG" id="ENOG502QQ5N">
    <property type="taxonomic scope" value="Eukaryota"/>
</dbReference>
<dbReference type="HOGENOM" id="CLU_010543_0_1_1"/>
<dbReference type="OMA" id="HFWYQVL"/>
<dbReference type="OrthoDB" id="2113341at2759"/>
<dbReference type="Proteomes" id="UP000002051">
    <property type="component" value="Chromosome 5"/>
</dbReference>
<dbReference type="Proteomes" id="UP000265566">
    <property type="component" value="Chromosome 5"/>
</dbReference>
<dbReference type="ExpressionAtlas" id="Q40372">
    <property type="expression patterns" value="differential"/>
</dbReference>
<dbReference type="GO" id="GO:0005576">
    <property type="term" value="C:extracellular region"/>
    <property type="evidence" value="ECO:0007669"/>
    <property type="project" value="UniProtKB-SubCell"/>
</dbReference>
<dbReference type="GO" id="GO:0020037">
    <property type="term" value="F:heme binding"/>
    <property type="evidence" value="ECO:0007669"/>
    <property type="project" value="InterPro"/>
</dbReference>
<dbReference type="GO" id="GO:0140825">
    <property type="term" value="F:lactoperoxidase activity"/>
    <property type="evidence" value="ECO:0007669"/>
    <property type="project" value="UniProtKB-EC"/>
</dbReference>
<dbReference type="GO" id="GO:0046872">
    <property type="term" value="F:metal ion binding"/>
    <property type="evidence" value="ECO:0007669"/>
    <property type="project" value="UniProtKB-KW"/>
</dbReference>
<dbReference type="GO" id="GO:0042744">
    <property type="term" value="P:hydrogen peroxide catabolic process"/>
    <property type="evidence" value="ECO:0007669"/>
    <property type="project" value="UniProtKB-KW"/>
</dbReference>
<dbReference type="GO" id="GO:0009877">
    <property type="term" value="P:nodulation"/>
    <property type="evidence" value="ECO:0007669"/>
    <property type="project" value="UniProtKB-KW"/>
</dbReference>
<dbReference type="GO" id="GO:0006979">
    <property type="term" value="P:response to oxidative stress"/>
    <property type="evidence" value="ECO:0007669"/>
    <property type="project" value="InterPro"/>
</dbReference>
<dbReference type="CDD" id="cd00693">
    <property type="entry name" value="secretory_peroxidase"/>
    <property type="match status" value="1"/>
</dbReference>
<dbReference type="FunFam" id="1.10.420.10:FF:000001">
    <property type="entry name" value="Peroxidase"/>
    <property type="match status" value="1"/>
</dbReference>
<dbReference type="FunFam" id="1.10.520.10:FF:000009">
    <property type="entry name" value="Peroxidase"/>
    <property type="match status" value="1"/>
</dbReference>
<dbReference type="Gene3D" id="1.10.520.10">
    <property type="match status" value="1"/>
</dbReference>
<dbReference type="Gene3D" id="1.10.420.10">
    <property type="entry name" value="Peroxidase, domain 2"/>
    <property type="match status" value="1"/>
</dbReference>
<dbReference type="InterPro" id="IPR002016">
    <property type="entry name" value="Haem_peroxidase"/>
</dbReference>
<dbReference type="InterPro" id="IPR010255">
    <property type="entry name" value="Haem_peroxidase_sf"/>
</dbReference>
<dbReference type="InterPro" id="IPR000823">
    <property type="entry name" value="Peroxidase_pln"/>
</dbReference>
<dbReference type="InterPro" id="IPR019794">
    <property type="entry name" value="Peroxidases_AS"/>
</dbReference>
<dbReference type="InterPro" id="IPR019793">
    <property type="entry name" value="Peroxidases_heam-ligand_BS"/>
</dbReference>
<dbReference type="InterPro" id="IPR033905">
    <property type="entry name" value="Secretory_peroxidase"/>
</dbReference>
<dbReference type="PANTHER" id="PTHR31388">
    <property type="entry name" value="PEROXIDASE 72-RELATED"/>
    <property type="match status" value="1"/>
</dbReference>
<dbReference type="PANTHER" id="PTHR31388:SF123">
    <property type="entry name" value="PEROXIDASE RIP1"/>
    <property type="match status" value="1"/>
</dbReference>
<dbReference type="Pfam" id="PF00141">
    <property type="entry name" value="peroxidase"/>
    <property type="match status" value="1"/>
</dbReference>
<dbReference type="PRINTS" id="PR00458">
    <property type="entry name" value="PEROXIDASE"/>
</dbReference>
<dbReference type="PRINTS" id="PR00461">
    <property type="entry name" value="PLPEROXIDASE"/>
</dbReference>
<dbReference type="SUPFAM" id="SSF48113">
    <property type="entry name" value="Heme-dependent peroxidases"/>
    <property type="match status" value="1"/>
</dbReference>
<dbReference type="PROSITE" id="PS00435">
    <property type="entry name" value="PEROXIDASE_1"/>
    <property type="match status" value="1"/>
</dbReference>
<dbReference type="PROSITE" id="PS00436">
    <property type="entry name" value="PEROXIDASE_2"/>
    <property type="match status" value="1"/>
</dbReference>
<dbReference type="PROSITE" id="PS50873">
    <property type="entry name" value="PEROXIDASE_4"/>
    <property type="match status" value="1"/>
</dbReference>
<comment type="function">
    <text evidence="4">Removal of H(2)O(2), oxidation of toxic reductants, biosynthesis and degradation of lignin, suberization, auxin catabolism, response to environmental stresses such as wounding, pathogen attack and oxidative stress. These functions might be dependent on each isozyme/isoform in each plant tissue.</text>
</comment>
<comment type="catalytic activity">
    <reaction evidence="2">
        <text>2 a phenolic donor + H2O2 = 2 a phenolic radical donor + 2 H2O</text>
        <dbReference type="Rhea" id="RHEA:56136"/>
        <dbReference type="ChEBI" id="CHEBI:15377"/>
        <dbReference type="ChEBI" id="CHEBI:16240"/>
        <dbReference type="ChEBI" id="CHEBI:139520"/>
        <dbReference type="ChEBI" id="CHEBI:139521"/>
        <dbReference type="EC" id="1.11.1.7"/>
    </reaction>
</comment>
<comment type="cofactor">
    <cofactor evidence="4">
        <name>heme b</name>
        <dbReference type="ChEBI" id="CHEBI:60344"/>
    </cofactor>
    <text evidence="4">Binds 1 heme b (iron(II)-protoporphyrin IX) group per subunit.</text>
</comment>
<comment type="cofactor">
    <cofactor evidence="4">
        <name>Ca(2+)</name>
        <dbReference type="ChEBI" id="CHEBI:29108"/>
    </cofactor>
    <text evidence="4">Binds 2 calcium ions per subunit.</text>
</comment>
<comment type="subcellular location">
    <subcellularLocation>
        <location evidence="4">Secreted</location>
    </subcellularLocation>
</comment>
<comment type="tissue specificity">
    <text evidence="6">Expressed in the differentiating root epidermis following inoculation with the bacterial symbiont Sinorhizobium meliloti.</text>
</comment>
<comment type="developmental stage">
    <text evidence="6 8 9">Accumulates at the zone of impending infection in the presence of Sinorhizobium meliloti during the preinfection period, in the epidermal cells of the differentiating root zone (PubMed:12059100, PubMed:7696879, PubMed:8972593). During nodulation, first observed in root tips prior to nodule formation (PubMed:8972593). Later, after rhizobial infection, specifically associated with the zone of nodule development, including nascent nodule primordia, at the site of sustained bacterial infection (PubMed:12059100, PubMed:8972593).</text>
</comment>
<comment type="induction">
    <text evidence="6 7 8">Induced rapidly and transiently by the Sinorhizobium meliloti synthesized lipochitooligosaccharide signal molecule (Nod factor RmlV) in early steps of nodulation, during the preinfection period, prior to the colonization by S.meliloti and nodule morphogenesis (PubMed:15516512, PubMed:7696879). Triggered by reactive oxygen species (ROS) such as hydrogen peroxide H(2)O(2), possibly in response to S.meliloti in the nodulation zone of roots (PubMed:12059100).</text>
</comment>
<comment type="similarity">
    <text evidence="4">Belongs to the peroxidase family. Classical plant (class III) peroxidase subfamily.</text>
</comment>
<comment type="sequence caution" evidence="12">
    <conflict type="erroneous gene model prediction">
        <sequence resource="EMBL-CDS" id="AES98949"/>
    </conflict>
</comment>
<comment type="sequence caution" evidence="12">
    <conflict type="erroneous gene model prediction">
        <sequence resource="EMBL-CDS" id="RHN56715"/>
    </conflict>
</comment>
<keyword id="KW-0106">Calcium</keyword>
<keyword id="KW-1015">Disulfide bond</keyword>
<keyword id="KW-0325">Glycoprotein</keyword>
<keyword id="KW-0349">Heme</keyword>
<keyword id="KW-0376">Hydrogen peroxide</keyword>
<keyword id="KW-0408">Iron</keyword>
<keyword id="KW-0479">Metal-binding</keyword>
<keyword id="KW-0536">Nodulation</keyword>
<keyword id="KW-0560">Oxidoreductase</keyword>
<keyword id="KW-0575">Peroxidase</keyword>
<keyword id="KW-1185">Reference proteome</keyword>
<keyword id="KW-0964">Secreted</keyword>
<keyword id="KW-0732">Signal</keyword>
<accession>Q40372</accession>
<accession>G7KFL7</accession>
<evidence type="ECO:0000250" key="1">
    <source>
        <dbReference type="UniProtKB" id="P00433"/>
    </source>
</evidence>
<evidence type="ECO:0000250" key="2">
    <source>
        <dbReference type="UniProtKB" id="Q9LEH3"/>
    </source>
</evidence>
<evidence type="ECO:0000255" key="3"/>
<evidence type="ECO:0000255" key="4">
    <source>
        <dbReference type="PROSITE-ProRule" id="PRU00297"/>
    </source>
</evidence>
<evidence type="ECO:0000255" key="5">
    <source>
        <dbReference type="PROSITE-ProRule" id="PRU00498"/>
    </source>
</evidence>
<evidence type="ECO:0000269" key="6">
    <source>
    </source>
</evidence>
<evidence type="ECO:0000269" key="7">
    <source>
    </source>
</evidence>
<evidence type="ECO:0000269" key="8">
    <source>
    </source>
</evidence>
<evidence type="ECO:0000269" key="9">
    <source>
    </source>
</evidence>
<evidence type="ECO:0000303" key="10">
    <source>
    </source>
</evidence>
<evidence type="ECO:0000303" key="11">
    <source>
    </source>
</evidence>
<evidence type="ECO:0000305" key="12"/>
<evidence type="ECO:0000312" key="13">
    <source>
        <dbReference type="EMBL" id="AES98948.1"/>
    </source>
</evidence>
<evidence type="ECO:0000312" key="14">
    <source>
        <dbReference type="EMBL" id="AES98949.1"/>
    </source>
</evidence>
<evidence type="ECO:0000312" key="15">
    <source>
        <dbReference type="EMBL" id="RHN56715.1"/>
    </source>
</evidence>
<gene>
    <name evidence="11" type="primary">RIP1</name>
    <name evidence="13 14" type="ordered locus">MTR_5g074860</name>
    <name evidence="15" type="ordered locus">MtrunA17_Chr5g0432401</name>
</gene>
<name>RIP1_MEDTR</name>
<proteinExistence type="evidence at transcript level"/>
<organism>
    <name type="scientific">Medicago truncatula</name>
    <name type="common">Barrel medic</name>
    <name type="synonym">Medicago tribuloides</name>
    <dbReference type="NCBI Taxonomy" id="3880"/>
    <lineage>
        <taxon>Eukaryota</taxon>
        <taxon>Viridiplantae</taxon>
        <taxon>Streptophyta</taxon>
        <taxon>Embryophyta</taxon>
        <taxon>Tracheophyta</taxon>
        <taxon>Spermatophyta</taxon>
        <taxon>Magnoliopsida</taxon>
        <taxon>eudicotyledons</taxon>
        <taxon>Gunneridae</taxon>
        <taxon>Pentapetalae</taxon>
        <taxon>rosids</taxon>
        <taxon>fabids</taxon>
        <taxon>Fabales</taxon>
        <taxon>Fabaceae</taxon>
        <taxon>Papilionoideae</taxon>
        <taxon>50 kb inversion clade</taxon>
        <taxon>NPAAA clade</taxon>
        <taxon>Hologalegina</taxon>
        <taxon>IRL clade</taxon>
        <taxon>Trifolieae</taxon>
        <taxon>Medicago</taxon>
    </lineage>
</organism>
<protein>
    <recommendedName>
        <fullName evidence="11">Peroxidase RIP1</fullName>
        <ecNumber evidence="2">1.11.1.7</ecNumber>
    </recommendedName>
    <alternativeName>
        <fullName evidence="10">Early nodulin RIP1</fullName>
    </alternativeName>
</protein>
<reference key="1">
    <citation type="journal article" date="1995" name="Plant Cell">
        <title>Transient induction of a peroxidase gene in Medicago truncatula precedes infection by Rhizobium meliloti.</title>
        <authorList>
            <person name="Cook D."/>
            <person name="Dreyer D.A."/>
            <person name="Bonnet D."/>
            <person name="Howell M."/>
            <person name="Nony E."/>
            <person name="VandenBosch K.A."/>
        </authorList>
    </citation>
    <scope>NUCLEOTIDE SEQUENCE [GENOMIC DNA]</scope>
    <scope>INDUCTION DURING NODULATION</scope>
    <scope>DEVELOPMENTAL STAGE</scope>
    <source>
        <strain>cv. Jemalong A17</strain>
        <tissue>Root</tissue>
    </source>
</reference>
<reference key="2">
    <citation type="journal article" date="2011" name="Nature">
        <title>The Medicago genome provides insight into the evolution of rhizobial symbioses.</title>
        <authorList>
            <person name="Young N.D."/>
            <person name="Debelle F."/>
            <person name="Oldroyd G.E.D."/>
            <person name="Geurts R."/>
            <person name="Cannon S.B."/>
            <person name="Udvardi M.K."/>
            <person name="Benedito V.A."/>
            <person name="Mayer K.F.X."/>
            <person name="Gouzy J."/>
            <person name="Schoof H."/>
            <person name="Van de Peer Y."/>
            <person name="Proost S."/>
            <person name="Cook D.R."/>
            <person name="Meyers B.C."/>
            <person name="Spannagl M."/>
            <person name="Cheung F."/>
            <person name="De Mita S."/>
            <person name="Krishnakumar V."/>
            <person name="Gundlach H."/>
            <person name="Zhou S."/>
            <person name="Mudge J."/>
            <person name="Bharti A.K."/>
            <person name="Murray J.D."/>
            <person name="Naoumkina M.A."/>
            <person name="Rosen B."/>
            <person name="Silverstein K.A.T."/>
            <person name="Tang H."/>
            <person name="Rombauts S."/>
            <person name="Zhao P.X."/>
            <person name="Zhou P."/>
            <person name="Barbe V."/>
            <person name="Bardou P."/>
            <person name="Bechner M."/>
            <person name="Bellec A."/>
            <person name="Berger A."/>
            <person name="Berges H."/>
            <person name="Bidwell S."/>
            <person name="Bisseling T."/>
            <person name="Choisne N."/>
            <person name="Couloux A."/>
            <person name="Denny R."/>
            <person name="Deshpande S."/>
            <person name="Dai X."/>
            <person name="Doyle J.J."/>
            <person name="Dudez A.-M."/>
            <person name="Farmer A.D."/>
            <person name="Fouteau S."/>
            <person name="Franken C."/>
            <person name="Gibelin C."/>
            <person name="Gish J."/>
            <person name="Goldstein S."/>
            <person name="Gonzalez A.J."/>
            <person name="Green P.J."/>
            <person name="Hallab A."/>
            <person name="Hartog M."/>
            <person name="Hua A."/>
            <person name="Humphray S.J."/>
            <person name="Jeong D.-H."/>
            <person name="Jing Y."/>
            <person name="Jocker A."/>
            <person name="Kenton S.M."/>
            <person name="Kim D.-J."/>
            <person name="Klee K."/>
            <person name="Lai H."/>
            <person name="Lang C."/>
            <person name="Lin S."/>
            <person name="Macmil S.L."/>
            <person name="Magdelenat G."/>
            <person name="Matthews L."/>
            <person name="McCorrison J."/>
            <person name="Monaghan E.L."/>
            <person name="Mun J.-H."/>
            <person name="Najar F.Z."/>
            <person name="Nicholson C."/>
            <person name="Noirot C."/>
            <person name="O'Bleness M."/>
            <person name="Paule C.R."/>
            <person name="Poulain J."/>
            <person name="Prion F."/>
            <person name="Qin B."/>
            <person name="Qu C."/>
            <person name="Retzel E.F."/>
            <person name="Riddle C."/>
            <person name="Sallet E."/>
            <person name="Samain S."/>
            <person name="Samson N."/>
            <person name="Sanders I."/>
            <person name="Saurat O."/>
            <person name="Scarpelli C."/>
            <person name="Schiex T."/>
            <person name="Segurens B."/>
            <person name="Severin A.J."/>
            <person name="Sherrier D.J."/>
            <person name="Shi R."/>
            <person name="Sims S."/>
            <person name="Singer S.R."/>
            <person name="Sinharoy S."/>
            <person name="Sterck L."/>
            <person name="Viollet A."/>
            <person name="Wang B.-B."/>
            <person name="Wang K."/>
            <person name="Wang M."/>
            <person name="Wang X."/>
            <person name="Warfsmann J."/>
            <person name="Weissenbach J."/>
            <person name="White D.D."/>
            <person name="White J.D."/>
            <person name="Wiley G.B."/>
            <person name="Wincker P."/>
            <person name="Xing Y."/>
            <person name="Yang L."/>
            <person name="Yao Z."/>
            <person name="Ying F."/>
            <person name="Zhai J."/>
            <person name="Zhou L."/>
            <person name="Zuber A."/>
            <person name="Denarie J."/>
            <person name="Dixon R.A."/>
            <person name="May G.D."/>
            <person name="Schwartz D.C."/>
            <person name="Rogers J."/>
            <person name="Quetier F."/>
            <person name="Town C.D."/>
            <person name="Roe B.A."/>
        </authorList>
    </citation>
    <scope>NUCLEOTIDE SEQUENCE [LARGE SCALE GENOMIC DNA]</scope>
    <source>
        <strain>cv. Jemalong A17</strain>
    </source>
</reference>
<reference key="3">
    <citation type="journal article" date="2014" name="BMC Genomics">
        <title>An improved genome release (version Mt4.0) for the model legume Medicago truncatula.</title>
        <authorList>
            <person name="Tang H."/>
            <person name="Krishnakumar V."/>
            <person name="Bidwell S."/>
            <person name="Rosen B."/>
            <person name="Chan A."/>
            <person name="Zhou S."/>
            <person name="Gentzbittel L."/>
            <person name="Childs K.L."/>
            <person name="Yandell M."/>
            <person name="Gundlach H."/>
            <person name="Mayer K.F."/>
            <person name="Schwartz D.C."/>
            <person name="Town C.D."/>
        </authorList>
    </citation>
    <scope>GENOME REANNOTATION</scope>
    <source>
        <strain>cv. Jemalong A17</strain>
    </source>
</reference>
<reference key="4">
    <citation type="journal article" date="2018" name="Nat. Plants">
        <title>Whole-genome landscape of Medicago truncatula symbiotic genes.</title>
        <authorList>
            <person name="Pecrix Y."/>
            <person name="Staton S.E."/>
            <person name="Sallet E."/>
            <person name="Lelandais-Briere C."/>
            <person name="Moreau S."/>
            <person name="Carrere S."/>
            <person name="Blein T."/>
            <person name="Jardinaud M.F."/>
            <person name="Latrasse D."/>
            <person name="Zouine M."/>
            <person name="Zahm M."/>
            <person name="Kreplak J."/>
            <person name="Mayjonade B."/>
            <person name="Satge C."/>
            <person name="Perez M."/>
            <person name="Cauet S."/>
            <person name="Marande W."/>
            <person name="Chantry-Darmon C."/>
            <person name="Lopez-Roques C."/>
            <person name="Bouchez O."/>
            <person name="Berard A."/>
            <person name="Debelle F."/>
            <person name="Munos S."/>
            <person name="Bendahmane A."/>
            <person name="Berges H."/>
            <person name="Niebel A."/>
            <person name="Buitink J."/>
            <person name="Frugier F."/>
            <person name="Benhamed M."/>
            <person name="Crespi M."/>
            <person name="Gouzy J."/>
            <person name="Gamas P."/>
        </authorList>
    </citation>
    <scope>NUCLEOTIDE SEQUENCE [LARGE SCALE GENOMIC DNA]</scope>
    <source>
        <strain>cv. Jemalong A17</strain>
    </source>
</reference>
<reference key="5">
    <citation type="journal article" date="1996" name="Plant Physiol.">
        <title>Gene structure and differential regulation of the Rhizobium-induced peroxidase gene rip1.</title>
        <authorList>
            <person name="Peng H.-M."/>
            <person name="Dreyer D.A."/>
            <person name="VandenBosch K.A."/>
            <person name="Cook D."/>
        </authorList>
    </citation>
    <scope>DEVELOPMENTAL STAGE</scope>
    <source>
        <strain>cv. Jemalong A17</strain>
        <tissue>Root</tissue>
    </source>
</reference>
<reference key="6">
    <citation type="journal article" date="2002" name="Mol. Plant Microbe Interact.">
        <title>Nod factor induction of reactive oxygen species production is correlated with expression of the early nodulin gene rip1 in Medicago truncatula.</title>
        <authorList>
            <person name="Ramu S.K."/>
            <person name="Peng H.-M."/>
            <person name="Cook D.R."/>
        </authorList>
    </citation>
    <scope>TISSUE SPECIFICITY</scope>
    <scope>DEVELOPMENTAL STAGE</scope>
    <scope>INDUCTION BY REACTIVE OXYGEN SPECIES</scope>
</reference>
<reference key="7">
    <citation type="journal article" date="2004" name="Plant Physiol.">
        <title>LIN, a Medicago truncatula gene required for nodule differentiation and persistence of rhizobial infections.</title>
        <authorList>
            <person name="Kuppusamy K.T."/>
            <person name="Endre G."/>
            <person name="Prabhu R."/>
            <person name="Penmetsa R.V."/>
            <person name="Veereshlingam H."/>
            <person name="Cook D.R."/>
            <person name="Dickstein R."/>
            <person name="Vandenbosch K.A."/>
        </authorList>
    </citation>
    <scope>INDUCTION DURING NODULATION</scope>
    <source>
        <strain>cv. Jemalong A17</strain>
    </source>
</reference>
<reference key="8">
    <citation type="journal article" date="2015" name="Int. Rev. Cell Mol. Biol.">
        <title>Leguminous plants: inventors of root nodules to accommodate symbiotic bacteria.</title>
        <authorList>
            <person name="Suzaki T."/>
            <person name="Yoro E."/>
            <person name="Kawaguchi M."/>
        </authorList>
    </citation>
    <scope>REVIEW ON NODULATION</scope>
</reference>
<reference key="9">
    <citation type="journal article" date="2020" name="Plant Cell">
        <title>Celebrating 20 years of genetic discoveries in legume nodulation and symbiotic nitrogen fixation.</title>
        <authorList>
            <person name="Roy S."/>
            <person name="Liu W."/>
            <person name="Nandety R.S."/>
            <person name="Crook A."/>
            <person name="Mysore K.S."/>
            <person name="Pislariu C.I."/>
            <person name="Frugoli J."/>
            <person name="Dickstein R."/>
            <person name="Udvardi M.K."/>
        </authorList>
    </citation>
    <scope>REVIEW ON NODULATION</scope>
</reference>